<gene>
    <name type="primary">CIC1</name>
    <name type="synonym">NSA3</name>
    <name type="ordered locus">YHR052W</name>
</gene>
<organism>
    <name type="scientific">Saccharomyces cerevisiae (strain ATCC 204508 / S288c)</name>
    <name type="common">Baker's yeast</name>
    <dbReference type="NCBI Taxonomy" id="559292"/>
    <lineage>
        <taxon>Eukaryota</taxon>
        <taxon>Fungi</taxon>
        <taxon>Dikarya</taxon>
        <taxon>Ascomycota</taxon>
        <taxon>Saccharomycotina</taxon>
        <taxon>Saccharomycetes</taxon>
        <taxon>Saccharomycetales</taxon>
        <taxon>Saccharomycetaceae</taxon>
        <taxon>Saccharomyces</taxon>
    </lineage>
</organism>
<comment type="function">
    <text evidence="2 6">An adapter protein that specifically links the 26S proteasome to its substrate CDC4 which is one of the substrate recognition subunits of the SCF E3 ubiquitin ligase complex. Required for turnover of cell cycle regulatory proteins CDC4 and GRR1. Required for synthesis and nuclear export of 60S ribosomal subunits. Required for vegetative growth.</text>
</comment>
<comment type="subunit">
    <text evidence="2 3">Interacts with CDC4, PRE4, PRE6, RPT1 and SCL1 as part of the fully assembled 26S proteasome. Interacts with pre-ribosomal particles constituent NOP7.</text>
</comment>
<comment type="interaction">
    <interactant intactId="EBI-24538">
        <id>P38779</id>
    </interactant>
    <interactant intactId="EBI-4434">
        <id>P07834</id>
        <label>CDC4</label>
    </interactant>
    <organismsDiffer>false</organismsDiffer>
    <experiments>2</experiments>
</comment>
<comment type="interaction">
    <interactant intactId="EBI-24538">
        <id>P38779</id>
    </interactant>
    <interactant intactId="EBI-24538">
        <id>P38779</id>
        <label>CIC1</label>
    </interactant>
    <organismsDiffer>false</organismsDiffer>
    <experiments>2</experiments>
</comment>
<comment type="interaction">
    <interactant intactId="EBI-24538">
        <id>P38779</id>
    </interactant>
    <interactant intactId="EBI-28853">
        <id>P53927</id>
        <label>NOP15</label>
    </interactant>
    <organismsDiffer>false</organismsDiffer>
    <experiments>4</experiments>
</comment>
<comment type="interaction">
    <interactant intactId="EBI-24538">
        <id>P38779</id>
    </interactant>
    <interactant intactId="EBI-12122">
        <id>P37838</id>
        <label>NOP4</label>
    </interactant>
    <organismsDiffer>false</organismsDiffer>
    <experiments>6</experiments>
</comment>
<comment type="interaction">
    <interactant intactId="EBI-24538">
        <id>P38779</id>
    </interactant>
    <interactant intactId="EBI-13145">
        <id>P53261</id>
        <label>NOP7</label>
    </interactant>
    <organismsDiffer>false</organismsDiffer>
    <experiments>5</experiments>
</comment>
<comment type="interaction">
    <interactant intactId="EBI-24538">
        <id>P38779</id>
    </interactant>
    <interactant intactId="EBI-13980">
        <id>P40303</id>
        <label>PRE6</label>
    </interactant>
    <organismsDiffer>false</organismsDiffer>
    <experiments>5</experiments>
</comment>
<comment type="interaction">
    <interactant intactId="EBI-24538">
        <id>P38779</id>
    </interactant>
    <interactant intactId="EBI-15415">
        <id>P40693</id>
        <label>RLP7</label>
    </interactant>
    <organismsDiffer>false</organismsDiffer>
    <experiments>4</experiments>
</comment>
<comment type="subcellular location">
    <subcellularLocation>
        <location evidence="2 4">Nucleus</location>
        <location evidence="2 4">Nucleolus</location>
    </subcellularLocation>
</comment>
<comment type="miscellaneous">
    <text evidence="5">Present with 45900 molecules/cell in log phase SD medium.</text>
</comment>
<reference key="1">
    <citation type="journal article" date="1994" name="Science">
        <title>Complete nucleotide sequence of Saccharomyces cerevisiae chromosome VIII.</title>
        <authorList>
            <person name="Johnston M."/>
            <person name="Andrews S."/>
            <person name="Brinkman R."/>
            <person name="Cooper J."/>
            <person name="Ding H."/>
            <person name="Dover J."/>
            <person name="Du Z."/>
            <person name="Favello A."/>
            <person name="Fulton L."/>
            <person name="Gattung S."/>
            <person name="Geisel C."/>
            <person name="Kirsten J."/>
            <person name="Kucaba T."/>
            <person name="Hillier L.W."/>
            <person name="Jier M."/>
            <person name="Johnston L."/>
            <person name="Langston Y."/>
            <person name="Latreille P."/>
            <person name="Louis E.J."/>
            <person name="Macri C."/>
            <person name="Mardis E."/>
            <person name="Menezes S."/>
            <person name="Mouser L."/>
            <person name="Nhan M."/>
            <person name="Rifkin L."/>
            <person name="Riles L."/>
            <person name="St Peter H."/>
            <person name="Trevaskis E."/>
            <person name="Vaughan K."/>
            <person name="Vignati D."/>
            <person name="Wilcox L."/>
            <person name="Wohldman P."/>
            <person name="Waterston R."/>
            <person name="Wilson R."/>
            <person name="Vaudin M."/>
        </authorList>
    </citation>
    <scope>NUCLEOTIDE SEQUENCE [LARGE SCALE GENOMIC DNA]</scope>
    <source>
        <strain>ATCC 204508 / S288c</strain>
    </source>
</reference>
<reference key="2">
    <citation type="journal article" date="2014" name="G3 (Bethesda)">
        <title>The reference genome sequence of Saccharomyces cerevisiae: Then and now.</title>
        <authorList>
            <person name="Engel S.R."/>
            <person name="Dietrich F.S."/>
            <person name="Fisk D.G."/>
            <person name="Binkley G."/>
            <person name="Balakrishnan R."/>
            <person name="Costanzo M.C."/>
            <person name="Dwight S.S."/>
            <person name="Hitz B.C."/>
            <person name="Karra K."/>
            <person name="Nash R.S."/>
            <person name="Weng S."/>
            <person name="Wong E.D."/>
            <person name="Lloyd P."/>
            <person name="Skrzypek M.S."/>
            <person name="Miyasato S.R."/>
            <person name="Simison M."/>
            <person name="Cherry J.M."/>
        </authorList>
    </citation>
    <scope>GENOME REANNOTATION</scope>
    <source>
        <strain>ATCC 204508 / S288c</strain>
    </source>
</reference>
<reference key="3">
    <citation type="journal article" date="2007" name="Genome Res.">
        <title>Approaching a complete repository of sequence-verified protein-encoding clones for Saccharomyces cerevisiae.</title>
        <authorList>
            <person name="Hu Y."/>
            <person name="Rolfs A."/>
            <person name="Bhullar B."/>
            <person name="Murthy T.V.S."/>
            <person name="Zhu C."/>
            <person name="Berger M.F."/>
            <person name="Camargo A.A."/>
            <person name="Kelley F."/>
            <person name="McCarron S."/>
            <person name="Jepson D."/>
            <person name="Richardson A."/>
            <person name="Raphael J."/>
            <person name="Moreira D."/>
            <person name="Taycher E."/>
            <person name="Zuo D."/>
            <person name="Mohr S."/>
            <person name="Kane M.F."/>
            <person name="Williamson J."/>
            <person name="Simpson A.J.G."/>
            <person name="Bulyk M.L."/>
            <person name="Harlow E."/>
            <person name="Marsischky G."/>
            <person name="Kolodner R.D."/>
            <person name="LaBaer J."/>
        </authorList>
    </citation>
    <scope>NUCLEOTIDE SEQUENCE [GENOMIC DNA]</scope>
    <source>
        <strain>ATCC 204508 / S288c</strain>
    </source>
</reference>
<reference key="4">
    <citation type="journal article" date="2001" name="EMBO J.">
        <title>Cic1, an adaptor protein specifically linking the 26S proteasome to its substrate, the SCF component Cdc4.</title>
        <authorList>
            <person name="Jaeger S."/>
            <person name="Strayle J."/>
            <person name="Heinemeyer W."/>
            <person name="Wolf D.H."/>
        </authorList>
    </citation>
    <scope>FUNCTION</scope>
    <scope>INTERACTION WITH PROTEASOME SUBUNITS</scope>
    <scope>SUBCELLULAR LOCATION</scope>
</reference>
<reference key="5">
    <citation type="journal article" date="2001" name="Mol. Cell">
        <title>Composition and functional characterization of yeast 66S ribosome assembly intermediates.</title>
        <authorList>
            <person name="Harnpicharnchai P."/>
            <person name="Jakovljevic J."/>
            <person name="Horsey E."/>
            <person name="Miles T."/>
            <person name="Roman J."/>
            <person name="Rout M."/>
            <person name="Meagher D."/>
            <person name="Imai B."/>
            <person name="Guo Y."/>
            <person name="Brame C.J."/>
            <person name="Shabanowitz J."/>
            <person name="Hunt D.F."/>
            <person name="Woolford J.L. Jr."/>
        </authorList>
    </citation>
    <scope>INTERACTION WITH NOP7</scope>
</reference>
<reference key="6">
    <citation type="journal article" date="2003" name="Nature">
        <title>Global analysis of protein localization in budding yeast.</title>
        <authorList>
            <person name="Huh W.-K."/>
            <person name="Falvo J.V."/>
            <person name="Gerke L.C."/>
            <person name="Carroll A.S."/>
            <person name="Howson R.W."/>
            <person name="Weissman J.S."/>
            <person name="O'Shea E.K."/>
        </authorList>
    </citation>
    <scope>SUBCELLULAR LOCATION [LARGE SCALE ANALYSIS]</scope>
</reference>
<reference key="7">
    <citation type="journal article" date="2003" name="Nature">
        <title>Global analysis of protein expression in yeast.</title>
        <authorList>
            <person name="Ghaemmaghami S."/>
            <person name="Huh W.-K."/>
            <person name="Bower K."/>
            <person name="Howson R.W."/>
            <person name="Belle A."/>
            <person name="Dephoure N."/>
            <person name="O'Shea E.K."/>
            <person name="Weissman J.S."/>
        </authorList>
    </citation>
    <scope>LEVEL OF PROTEIN EXPRESSION [LARGE SCALE ANALYSIS]</scope>
</reference>
<reference key="8">
    <citation type="journal article" date="2003" name="RNA">
        <title>Cic1p/Nsa3p is required for synthesis and nuclear export of 60S ribosomal subunits.</title>
        <authorList>
            <person name="Fatica A."/>
            <person name="Oeffinger M."/>
            <person name="Tollervey D."/>
            <person name="Bozzoni I."/>
        </authorList>
    </citation>
    <scope>FUNCTION</scope>
</reference>
<reference key="9">
    <citation type="journal article" date="2007" name="J. Proteome Res.">
        <title>Large-scale phosphorylation analysis of alpha-factor-arrested Saccharomyces cerevisiae.</title>
        <authorList>
            <person name="Li X."/>
            <person name="Gerber S.A."/>
            <person name="Rudner A.D."/>
            <person name="Beausoleil S.A."/>
            <person name="Haas W."/>
            <person name="Villen J."/>
            <person name="Elias J.E."/>
            <person name="Gygi S.P."/>
        </authorList>
    </citation>
    <scope>IDENTIFICATION BY MASS SPECTROMETRY [LARGE SCALE ANALYSIS]</scope>
    <source>
        <strain>ADR376</strain>
    </source>
</reference>
<reference key="10">
    <citation type="journal article" date="2008" name="Mol. Cell. Proteomics">
        <title>A multidimensional chromatography technology for in-depth phosphoproteome analysis.</title>
        <authorList>
            <person name="Albuquerque C.P."/>
            <person name="Smolka M.B."/>
            <person name="Payne S.H."/>
            <person name="Bafna V."/>
            <person name="Eng J."/>
            <person name="Zhou H."/>
        </authorList>
    </citation>
    <scope>IDENTIFICATION BY MASS SPECTROMETRY [LARGE SCALE ANALYSIS]</scope>
</reference>
<feature type="chain" id="PRO_0000202895" description="Proteasome-interacting protein CIC1">
    <location>
        <begin position="1"/>
        <end position="376"/>
    </location>
</feature>
<feature type="region of interest" description="Disordered" evidence="1">
    <location>
        <begin position="1"/>
        <end position="29"/>
    </location>
</feature>
<feature type="region of interest" description="Required for interaction with CDC4">
    <location>
        <begin position="310"/>
        <end position="376"/>
    </location>
</feature>
<feature type="region of interest" description="Disordered" evidence="1">
    <location>
        <begin position="356"/>
        <end position="376"/>
    </location>
</feature>
<feature type="compositionally biased region" description="Basic and acidic residues" evidence="1">
    <location>
        <begin position="357"/>
        <end position="376"/>
    </location>
</feature>
<feature type="helix" evidence="8">
    <location>
        <begin position="34"/>
        <end position="48"/>
    </location>
</feature>
<feature type="strand" evidence="8">
    <location>
        <begin position="65"/>
        <end position="67"/>
    </location>
</feature>
<feature type="helix" evidence="8">
    <location>
        <begin position="70"/>
        <end position="73"/>
    </location>
</feature>
<feature type="turn" evidence="8">
    <location>
        <begin position="74"/>
        <end position="76"/>
    </location>
</feature>
<feature type="strand" evidence="8">
    <location>
        <begin position="77"/>
        <end position="86"/>
    </location>
</feature>
<feature type="turn" evidence="8">
    <location>
        <begin position="88"/>
        <end position="91"/>
    </location>
</feature>
<feature type="strand" evidence="8">
    <location>
        <begin position="97"/>
        <end position="101"/>
    </location>
</feature>
<feature type="helix" evidence="8">
    <location>
        <begin position="107"/>
        <end position="113"/>
    </location>
</feature>
<feature type="turn" evidence="8">
    <location>
        <begin position="114"/>
        <end position="116"/>
    </location>
</feature>
<feature type="strand" evidence="8">
    <location>
        <begin position="117"/>
        <end position="119"/>
    </location>
</feature>
<feature type="strand" evidence="8">
    <location>
        <begin position="123"/>
        <end position="127"/>
    </location>
</feature>
<feature type="strand" evidence="8">
    <location>
        <begin position="132"/>
        <end position="134"/>
    </location>
</feature>
<feature type="helix" evidence="8">
    <location>
        <begin position="137"/>
        <end position="144"/>
    </location>
</feature>
<feature type="helix" evidence="8">
    <location>
        <begin position="145"/>
        <end position="147"/>
    </location>
</feature>
<feature type="strand" evidence="8">
    <location>
        <begin position="153"/>
        <end position="156"/>
    </location>
</feature>
<feature type="turn" evidence="8">
    <location>
        <begin position="157"/>
        <end position="163"/>
    </location>
</feature>
<feature type="helix" evidence="8">
    <location>
        <begin position="167"/>
        <end position="174"/>
    </location>
</feature>
<feature type="strand" evidence="8">
    <location>
        <begin position="178"/>
        <end position="183"/>
    </location>
</feature>
<feature type="turn" evidence="8">
    <location>
        <begin position="184"/>
        <end position="186"/>
    </location>
</feature>
<feature type="helix" evidence="8">
    <location>
        <begin position="187"/>
        <end position="189"/>
    </location>
</feature>
<feature type="helix" evidence="8">
    <location>
        <begin position="190"/>
        <end position="194"/>
    </location>
</feature>
<feature type="turn" evidence="8">
    <location>
        <begin position="195"/>
        <end position="197"/>
    </location>
</feature>
<feature type="helix" evidence="8">
    <location>
        <begin position="198"/>
        <end position="200"/>
    </location>
</feature>
<feature type="strand" evidence="8">
    <location>
        <begin position="201"/>
        <end position="205"/>
    </location>
</feature>
<feature type="strand" evidence="8">
    <location>
        <begin position="207"/>
        <end position="209"/>
    </location>
</feature>
<feature type="strand" evidence="7">
    <location>
        <begin position="212"/>
        <end position="217"/>
    </location>
</feature>
<feature type="helix" evidence="8">
    <location>
        <begin position="219"/>
        <end position="232"/>
    </location>
</feature>
<feature type="strand" evidence="8">
    <location>
        <begin position="233"/>
        <end position="237"/>
    </location>
</feature>
<feature type="strand" evidence="8">
    <location>
        <begin position="240"/>
        <end position="250"/>
    </location>
</feature>
<feature type="turn" evidence="8">
    <location>
        <begin position="251"/>
        <end position="253"/>
    </location>
</feature>
<feature type="helix" evidence="8">
    <location>
        <begin position="256"/>
        <end position="273"/>
    </location>
</feature>
<feature type="strand" evidence="8">
    <location>
        <begin position="276"/>
        <end position="283"/>
    </location>
</feature>
<feature type="strand" evidence="8">
    <location>
        <begin position="289"/>
        <end position="293"/>
    </location>
</feature>
<feature type="helix" evidence="8">
    <location>
        <begin position="295"/>
        <end position="300"/>
    </location>
</feature>
<feature type="helix" evidence="8">
    <location>
        <begin position="328"/>
        <end position="334"/>
    </location>
</feature>
<dbReference type="EMBL" id="U00062">
    <property type="protein sequence ID" value="AAB68898.1"/>
    <property type="molecule type" value="Genomic_DNA"/>
</dbReference>
<dbReference type="EMBL" id="AY557834">
    <property type="protein sequence ID" value="AAS56160.1"/>
    <property type="molecule type" value="Genomic_DNA"/>
</dbReference>
<dbReference type="EMBL" id="BK006934">
    <property type="protein sequence ID" value="DAA06745.1"/>
    <property type="molecule type" value="Genomic_DNA"/>
</dbReference>
<dbReference type="PIR" id="S46729">
    <property type="entry name" value="S46729"/>
</dbReference>
<dbReference type="RefSeq" id="NP_011919.1">
    <property type="nucleotide sequence ID" value="NM_001179182.1"/>
</dbReference>
<dbReference type="PDB" id="3JCT">
    <property type="method" value="EM"/>
    <property type="resolution" value="3.08 A"/>
    <property type="chains" value="K=1-376"/>
</dbReference>
<dbReference type="PDB" id="5Z3G">
    <property type="method" value="EM"/>
    <property type="resolution" value="3.65 A"/>
    <property type="chains" value="H=1-376"/>
</dbReference>
<dbReference type="PDB" id="6C0F">
    <property type="method" value="EM"/>
    <property type="resolution" value="3.70 A"/>
    <property type="chains" value="K=1-376"/>
</dbReference>
<dbReference type="PDB" id="6CB1">
    <property type="method" value="EM"/>
    <property type="resolution" value="4.60 A"/>
    <property type="chains" value="K=1-376"/>
</dbReference>
<dbReference type="PDB" id="6ELZ">
    <property type="method" value="EM"/>
    <property type="resolution" value="3.30 A"/>
    <property type="chains" value="K=1-376"/>
</dbReference>
<dbReference type="PDB" id="6EM1">
    <property type="method" value="EM"/>
    <property type="resolution" value="3.60 A"/>
    <property type="chains" value="K=1-376"/>
</dbReference>
<dbReference type="PDB" id="6EM3">
    <property type="method" value="EM"/>
    <property type="resolution" value="3.20 A"/>
    <property type="chains" value="K=1-376"/>
</dbReference>
<dbReference type="PDB" id="6EM4">
    <property type="method" value="EM"/>
    <property type="resolution" value="4.10 A"/>
    <property type="chains" value="K=1-376"/>
</dbReference>
<dbReference type="PDB" id="6EM5">
    <property type="method" value="EM"/>
    <property type="resolution" value="4.30 A"/>
    <property type="chains" value="K=1-376"/>
</dbReference>
<dbReference type="PDB" id="6M62">
    <property type="method" value="EM"/>
    <property type="resolution" value="3.20 A"/>
    <property type="chains" value="K=1-376"/>
</dbReference>
<dbReference type="PDB" id="6YLX">
    <property type="method" value="EM"/>
    <property type="resolution" value="3.90 A"/>
    <property type="chains" value="K=1-376"/>
</dbReference>
<dbReference type="PDB" id="6YLY">
    <property type="method" value="EM"/>
    <property type="resolution" value="3.80 A"/>
    <property type="chains" value="K=1-376"/>
</dbReference>
<dbReference type="PDB" id="7BTB">
    <property type="method" value="EM"/>
    <property type="resolution" value="3.22 A"/>
    <property type="chains" value="K=1-376"/>
</dbReference>
<dbReference type="PDB" id="7NAC">
    <property type="method" value="EM"/>
    <property type="resolution" value="3.04 A"/>
    <property type="chains" value="K=1-376"/>
</dbReference>
<dbReference type="PDB" id="7OHP">
    <property type="method" value="EM"/>
    <property type="resolution" value="3.90 A"/>
    <property type="chains" value="K=1-376"/>
</dbReference>
<dbReference type="PDB" id="7OHQ">
    <property type="method" value="EM"/>
    <property type="resolution" value="3.10 A"/>
    <property type="chains" value="K=1-376"/>
</dbReference>
<dbReference type="PDB" id="7OHR">
    <property type="method" value="EM"/>
    <property type="resolution" value="4.72 A"/>
    <property type="chains" value="K=1-376"/>
</dbReference>
<dbReference type="PDB" id="7OHS">
    <property type="method" value="EM"/>
    <property type="resolution" value="4.38 A"/>
    <property type="chains" value="K=1-376"/>
</dbReference>
<dbReference type="PDB" id="7OHV">
    <property type="method" value="EM"/>
    <property type="resolution" value="3.90 A"/>
    <property type="chains" value="K=1-376"/>
</dbReference>
<dbReference type="PDB" id="7OHW">
    <property type="method" value="EM"/>
    <property type="resolution" value="3.50 A"/>
    <property type="chains" value="K=1-376"/>
</dbReference>
<dbReference type="PDB" id="7OHX">
    <property type="method" value="EM"/>
    <property type="resolution" value="3.30 A"/>
    <property type="chains" value="K=1-376"/>
</dbReference>
<dbReference type="PDB" id="7R6Q">
    <property type="method" value="EM"/>
    <property type="resolution" value="2.98 A"/>
    <property type="chains" value="K=1-376"/>
</dbReference>
<dbReference type="PDB" id="7R7A">
    <property type="method" value="EM"/>
    <property type="resolution" value="3.04 A"/>
    <property type="chains" value="K=1-376"/>
</dbReference>
<dbReference type="PDB" id="7U0H">
    <property type="method" value="EM"/>
    <property type="resolution" value="2.76 A"/>
    <property type="chains" value="K=1-376"/>
</dbReference>
<dbReference type="PDB" id="7UOO">
    <property type="method" value="EM"/>
    <property type="resolution" value="2.34 A"/>
    <property type="chains" value="K=1-376"/>
</dbReference>
<dbReference type="PDB" id="7UQB">
    <property type="method" value="EM"/>
    <property type="resolution" value="2.43 A"/>
    <property type="chains" value="K=1-376"/>
</dbReference>
<dbReference type="PDB" id="7UQZ">
    <property type="method" value="EM"/>
    <property type="resolution" value="2.44 A"/>
    <property type="chains" value="K=1-339"/>
</dbReference>
<dbReference type="PDB" id="7V08">
    <property type="method" value="EM"/>
    <property type="resolution" value="2.36 A"/>
    <property type="chains" value="K=1-376"/>
</dbReference>
<dbReference type="PDB" id="8E5T">
    <property type="method" value="EM"/>
    <property type="resolution" value="4.00 A"/>
    <property type="chains" value="K=1-376"/>
</dbReference>
<dbReference type="PDB" id="8V83">
    <property type="method" value="EM"/>
    <property type="resolution" value="2.53 A"/>
    <property type="chains" value="K=1-376"/>
</dbReference>
<dbReference type="PDB" id="8V84">
    <property type="method" value="EM"/>
    <property type="resolution" value="2.70 A"/>
    <property type="chains" value="K=1-376"/>
</dbReference>
<dbReference type="PDB" id="8V87">
    <property type="method" value="EM"/>
    <property type="resolution" value="2.66 A"/>
    <property type="chains" value="K=1-376"/>
</dbReference>
<dbReference type="PDBsum" id="3JCT"/>
<dbReference type="PDBsum" id="5Z3G"/>
<dbReference type="PDBsum" id="6C0F"/>
<dbReference type="PDBsum" id="6CB1"/>
<dbReference type="PDBsum" id="6ELZ"/>
<dbReference type="PDBsum" id="6EM1"/>
<dbReference type="PDBsum" id="6EM3"/>
<dbReference type="PDBsum" id="6EM4"/>
<dbReference type="PDBsum" id="6EM5"/>
<dbReference type="PDBsum" id="6M62"/>
<dbReference type="PDBsum" id="6YLX"/>
<dbReference type="PDBsum" id="6YLY"/>
<dbReference type="PDBsum" id="7BTB"/>
<dbReference type="PDBsum" id="7NAC"/>
<dbReference type="PDBsum" id="7OHP"/>
<dbReference type="PDBsum" id="7OHQ"/>
<dbReference type="PDBsum" id="7OHR"/>
<dbReference type="PDBsum" id="7OHS"/>
<dbReference type="PDBsum" id="7OHV"/>
<dbReference type="PDBsum" id="7OHW"/>
<dbReference type="PDBsum" id="7OHX"/>
<dbReference type="PDBsum" id="7R6Q"/>
<dbReference type="PDBsum" id="7R7A"/>
<dbReference type="PDBsum" id="7U0H"/>
<dbReference type="PDBsum" id="7UOO"/>
<dbReference type="PDBsum" id="7UQB"/>
<dbReference type="PDBsum" id="7UQZ"/>
<dbReference type="PDBsum" id="7V08"/>
<dbReference type="PDBsum" id="8E5T"/>
<dbReference type="PDBsum" id="8V83"/>
<dbReference type="PDBsum" id="8V84"/>
<dbReference type="PDBsum" id="8V87"/>
<dbReference type="EMDB" id="EMD-10841"/>
<dbReference type="EMDB" id="EMD-10842"/>
<dbReference type="EMDB" id="EMD-12904"/>
<dbReference type="EMDB" id="EMD-12905"/>
<dbReference type="EMDB" id="EMD-12906"/>
<dbReference type="EMDB" id="EMD-12907"/>
<dbReference type="EMDB" id="EMD-12910"/>
<dbReference type="EMDB" id="EMD-12911"/>
<dbReference type="EMDB" id="EMD-12912"/>
<dbReference type="EMDB" id="EMD-24269"/>
<dbReference type="EMDB" id="EMD-24286"/>
<dbReference type="EMDB" id="EMD-24296"/>
<dbReference type="EMDB" id="EMD-26259"/>
<dbReference type="EMDB" id="EMD-26651"/>
<dbReference type="EMDB" id="EMD-26686"/>
<dbReference type="EMDB" id="EMD-26703"/>
<dbReference type="EMDB" id="EMD-26941"/>
<dbReference type="EMDB" id="EMD-27919"/>
<dbReference type="EMDB" id="EMD-30108"/>
<dbReference type="EMDB" id="EMD-30174"/>
<dbReference type="EMDB" id="EMD-43017"/>
<dbReference type="EMDB" id="EMD-43021"/>
<dbReference type="EMDB" id="EMD-43027"/>
<dbReference type="EMDB" id="EMD-6878"/>
<dbReference type="EMDB" id="EMD-7324"/>
<dbReference type="SMR" id="P38779"/>
<dbReference type="BioGRID" id="36484">
    <property type="interactions" value="234"/>
</dbReference>
<dbReference type="DIP" id="DIP-6491N"/>
<dbReference type="FunCoup" id="P38779">
    <property type="interactions" value="749"/>
</dbReference>
<dbReference type="IntAct" id="P38779">
    <property type="interactions" value="134"/>
</dbReference>
<dbReference type="MINT" id="P38779"/>
<dbReference type="STRING" id="4932.YHR052W"/>
<dbReference type="GlyGen" id="P38779">
    <property type="glycosylation" value="1 site"/>
</dbReference>
<dbReference type="iPTMnet" id="P38779"/>
<dbReference type="PaxDb" id="4932-YHR052W"/>
<dbReference type="PeptideAtlas" id="P38779"/>
<dbReference type="EnsemblFungi" id="YHR052W_mRNA">
    <property type="protein sequence ID" value="YHR052W"/>
    <property type="gene ID" value="YHR052W"/>
</dbReference>
<dbReference type="GeneID" id="856449"/>
<dbReference type="KEGG" id="sce:YHR052W"/>
<dbReference type="AGR" id="SGD:S000001094"/>
<dbReference type="SGD" id="S000001094">
    <property type="gene designation" value="CIC1"/>
</dbReference>
<dbReference type="VEuPathDB" id="FungiDB:YHR052W"/>
<dbReference type="eggNOG" id="KOG1685">
    <property type="taxonomic scope" value="Eukaryota"/>
</dbReference>
<dbReference type="HOGENOM" id="CLU_049748_0_0_1"/>
<dbReference type="InParanoid" id="P38779"/>
<dbReference type="OMA" id="SFYKPWK"/>
<dbReference type="OrthoDB" id="10251727at2759"/>
<dbReference type="BioCyc" id="YEAST:G3O-31106-MONOMER"/>
<dbReference type="BioGRID-ORCS" id="856449">
    <property type="hits" value="0 hits in 10 CRISPR screens"/>
</dbReference>
<dbReference type="PRO" id="PR:P38779"/>
<dbReference type="Proteomes" id="UP000002311">
    <property type="component" value="Chromosome VIII"/>
</dbReference>
<dbReference type="RNAct" id="P38779">
    <property type="molecule type" value="protein"/>
</dbReference>
<dbReference type="GO" id="GO:0005730">
    <property type="term" value="C:nucleolus"/>
    <property type="evidence" value="ECO:0000314"/>
    <property type="project" value="SGD"/>
</dbReference>
<dbReference type="GO" id="GO:0030687">
    <property type="term" value="C:preribosome, large subunit precursor"/>
    <property type="evidence" value="ECO:0000314"/>
    <property type="project" value="SGD"/>
</dbReference>
<dbReference type="GO" id="GO:0000502">
    <property type="term" value="C:proteasome complex"/>
    <property type="evidence" value="ECO:0007669"/>
    <property type="project" value="UniProtKB-KW"/>
</dbReference>
<dbReference type="GO" id="GO:0042802">
    <property type="term" value="F:identical protein binding"/>
    <property type="evidence" value="ECO:0000353"/>
    <property type="project" value="IntAct"/>
</dbReference>
<dbReference type="GO" id="GO:0070180">
    <property type="term" value="F:large ribosomal subunit rRNA binding"/>
    <property type="evidence" value="ECO:0000314"/>
    <property type="project" value="GO_Central"/>
</dbReference>
<dbReference type="GO" id="GO:0070628">
    <property type="term" value="F:proteasome binding"/>
    <property type="evidence" value="ECO:0000314"/>
    <property type="project" value="SGD"/>
</dbReference>
<dbReference type="GO" id="GO:0030674">
    <property type="term" value="F:protein-macromolecule adaptor activity"/>
    <property type="evidence" value="ECO:0000315"/>
    <property type="project" value="SGD"/>
</dbReference>
<dbReference type="GO" id="GO:0043023">
    <property type="term" value="F:ribosomal large subunit binding"/>
    <property type="evidence" value="ECO:0000314"/>
    <property type="project" value="SGD"/>
</dbReference>
<dbReference type="GO" id="GO:0003723">
    <property type="term" value="F:RNA binding"/>
    <property type="evidence" value="ECO:0000318"/>
    <property type="project" value="GO_Central"/>
</dbReference>
<dbReference type="GO" id="GO:0019843">
    <property type="term" value="F:rRNA binding"/>
    <property type="evidence" value="ECO:0000314"/>
    <property type="project" value="GO_Central"/>
</dbReference>
<dbReference type="GO" id="GO:0000466">
    <property type="term" value="P:maturation of 5.8S rRNA from tricistronic rRNA transcript (SSU-rRNA, 5.8S rRNA, LSU-rRNA)"/>
    <property type="evidence" value="ECO:0000315"/>
    <property type="project" value="GO_Central"/>
</dbReference>
<dbReference type="GO" id="GO:0000463">
    <property type="term" value="P:maturation of LSU-rRNA from tricistronic rRNA transcript (SSU-rRNA, 5.8S rRNA, LSU-rRNA)"/>
    <property type="evidence" value="ECO:0000315"/>
    <property type="project" value="GO_Central"/>
</dbReference>
<dbReference type="GO" id="GO:0030163">
    <property type="term" value="P:protein catabolic process"/>
    <property type="evidence" value="ECO:0000314"/>
    <property type="project" value="SGD"/>
</dbReference>
<dbReference type="GO" id="GO:0042273">
    <property type="term" value="P:ribosomal large subunit biogenesis"/>
    <property type="evidence" value="ECO:0000314"/>
    <property type="project" value="SGD"/>
</dbReference>
<dbReference type="GO" id="GO:0006364">
    <property type="term" value="P:rRNA processing"/>
    <property type="evidence" value="ECO:0000314"/>
    <property type="project" value="SGD"/>
</dbReference>
<dbReference type="InterPro" id="IPR023674">
    <property type="entry name" value="Ribosomal_uL1-like"/>
</dbReference>
<dbReference type="InterPro" id="IPR028364">
    <property type="entry name" value="Ribosomal_uL1/biogenesis"/>
</dbReference>
<dbReference type="Pfam" id="PF00687">
    <property type="entry name" value="Ribosomal_L1"/>
    <property type="match status" value="1"/>
</dbReference>
<dbReference type="SUPFAM" id="SSF56808">
    <property type="entry name" value="Ribosomal protein L1"/>
    <property type="match status" value="1"/>
</dbReference>
<proteinExistence type="evidence at protein level"/>
<sequence length="376" mass="42530">MAKKSNSKKSTPVSTPSKEKKKVIEKKSSTAIPRERVIKAVNELIKFTSKPQDENNEEGNNGKKNLLEDDEEELKKDLQLIVVNNKSFTGTSKSFKLKLLNVKHSFYKPWKEASATAVKDFKVLLILKDSDIKKVSEDDLFDQLDSEGIKVDEIICGKDLKTVYKAYEARNAFISQFSLILADDSIVTSLPKLMGGKAYNKVETTPISIRTHANKEFSLTTLTNNIKKVYMNQLPVKLPRGTTLNVHLGNLEWLRPEEFVDNVELISEQLIKAYQIRSIFIKTNRSPVLPLYYNQDVLDELEAKKDKIEETHEDDMVTIDGVQVHLSTFNKGLMEIANPSELGSIFSKQINNAKKRSSSELEKESSESEAVKKAKS</sequence>
<keyword id="KW-0002">3D-structure</keyword>
<keyword id="KW-0539">Nucleus</keyword>
<keyword id="KW-0647">Proteasome</keyword>
<keyword id="KW-1185">Reference proteome</keyword>
<keyword id="KW-0690">Ribosome biogenesis</keyword>
<accession>P38779</accession>
<accession>D3DL01</accession>
<evidence type="ECO:0000256" key="1">
    <source>
        <dbReference type="SAM" id="MobiDB-lite"/>
    </source>
</evidence>
<evidence type="ECO:0000269" key="2">
    <source>
    </source>
</evidence>
<evidence type="ECO:0000269" key="3">
    <source>
    </source>
</evidence>
<evidence type="ECO:0000269" key="4">
    <source>
    </source>
</evidence>
<evidence type="ECO:0000269" key="5">
    <source>
    </source>
</evidence>
<evidence type="ECO:0000269" key="6">
    <source>
    </source>
</evidence>
<evidence type="ECO:0007829" key="7">
    <source>
        <dbReference type="PDB" id="6EM3"/>
    </source>
</evidence>
<evidence type="ECO:0007829" key="8">
    <source>
        <dbReference type="PDB" id="7R6Q"/>
    </source>
</evidence>
<protein>
    <recommendedName>
        <fullName>Proteasome-interacting protein CIC1</fullName>
    </recommendedName>
    <alternativeName>
        <fullName>Core interacting component 1</fullName>
    </alternativeName>
</protein>
<name>CIC1_YEAST</name>